<name>DNAJ_HALOH</name>
<evidence type="ECO:0000255" key="1">
    <source>
        <dbReference type="HAMAP-Rule" id="MF_01152"/>
    </source>
</evidence>
<evidence type="ECO:0000256" key="2">
    <source>
        <dbReference type="SAM" id="MobiDB-lite"/>
    </source>
</evidence>
<reference key="1">
    <citation type="journal article" date="2009" name="PLoS ONE">
        <title>Genome analysis of the anaerobic thermohalophilic bacterium Halothermothrix orenii.</title>
        <authorList>
            <person name="Mavromatis K."/>
            <person name="Ivanova N."/>
            <person name="Anderson I."/>
            <person name="Lykidis A."/>
            <person name="Hooper S.D."/>
            <person name="Sun H."/>
            <person name="Kunin V."/>
            <person name="Lapidus A."/>
            <person name="Hugenholtz P."/>
            <person name="Patel B."/>
            <person name="Kyrpides N.C."/>
        </authorList>
    </citation>
    <scope>NUCLEOTIDE SEQUENCE [LARGE SCALE GENOMIC DNA]</scope>
    <source>
        <strain>H 168 / OCM 544 / DSM 9562</strain>
    </source>
</reference>
<organism>
    <name type="scientific">Halothermothrix orenii (strain H 168 / OCM 544 / DSM 9562)</name>
    <dbReference type="NCBI Taxonomy" id="373903"/>
    <lineage>
        <taxon>Bacteria</taxon>
        <taxon>Bacillati</taxon>
        <taxon>Bacillota</taxon>
        <taxon>Clostridia</taxon>
        <taxon>Halanaerobiales</taxon>
        <taxon>Halothermotrichaceae</taxon>
        <taxon>Halothermothrix</taxon>
    </lineage>
</organism>
<proteinExistence type="inferred from homology"/>
<accession>B8CXL0</accession>
<protein>
    <recommendedName>
        <fullName evidence="1">Chaperone protein DnaJ</fullName>
    </recommendedName>
</protein>
<keyword id="KW-0143">Chaperone</keyword>
<keyword id="KW-0963">Cytoplasm</keyword>
<keyword id="KW-0235">DNA replication</keyword>
<keyword id="KW-0479">Metal-binding</keyword>
<keyword id="KW-1185">Reference proteome</keyword>
<keyword id="KW-0677">Repeat</keyword>
<keyword id="KW-0346">Stress response</keyword>
<keyword id="KW-0862">Zinc</keyword>
<keyword id="KW-0863">Zinc-finger</keyword>
<gene>
    <name evidence="1" type="primary">dnaJ</name>
    <name type="ordered locus">Hore_12790</name>
</gene>
<feature type="chain" id="PRO_1000213685" description="Chaperone protein DnaJ">
    <location>
        <begin position="1"/>
        <end position="375"/>
    </location>
</feature>
<feature type="domain" description="J" evidence="1">
    <location>
        <begin position="6"/>
        <end position="71"/>
    </location>
</feature>
<feature type="repeat" description="CXXCXGXG motif">
    <location>
        <begin position="145"/>
        <end position="152"/>
    </location>
</feature>
<feature type="repeat" description="CXXCXGXG motif">
    <location>
        <begin position="162"/>
        <end position="169"/>
    </location>
</feature>
<feature type="repeat" description="CXXCXGXG motif">
    <location>
        <begin position="188"/>
        <end position="195"/>
    </location>
</feature>
<feature type="repeat" description="CXXCXGXG motif">
    <location>
        <begin position="202"/>
        <end position="209"/>
    </location>
</feature>
<feature type="zinc finger region" description="CR-type" evidence="1">
    <location>
        <begin position="132"/>
        <end position="214"/>
    </location>
</feature>
<feature type="region of interest" description="Disordered" evidence="2">
    <location>
        <begin position="222"/>
        <end position="243"/>
    </location>
</feature>
<feature type="binding site" evidence="1">
    <location>
        <position position="145"/>
    </location>
    <ligand>
        <name>Zn(2+)</name>
        <dbReference type="ChEBI" id="CHEBI:29105"/>
        <label>1</label>
    </ligand>
</feature>
<feature type="binding site" evidence="1">
    <location>
        <position position="148"/>
    </location>
    <ligand>
        <name>Zn(2+)</name>
        <dbReference type="ChEBI" id="CHEBI:29105"/>
        <label>1</label>
    </ligand>
</feature>
<feature type="binding site" evidence="1">
    <location>
        <position position="162"/>
    </location>
    <ligand>
        <name>Zn(2+)</name>
        <dbReference type="ChEBI" id="CHEBI:29105"/>
        <label>2</label>
    </ligand>
</feature>
<feature type="binding site" evidence="1">
    <location>
        <position position="165"/>
    </location>
    <ligand>
        <name>Zn(2+)</name>
        <dbReference type="ChEBI" id="CHEBI:29105"/>
        <label>2</label>
    </ligand>
</feature>
<feature type="binding site" evidence="1">
    <location>
        <position position="188"/>
    </location>
    <ligand>
        <name>Zn(2+)</name>
        <dbReference type="ChEBI" id="CHEBI:29105"/>
        <label>2</label>
    </ligand>
</feature>
<feature type="binding site" evidence="1">
    <location>
        <position position="191"/>
    </location>
    <ligand>
        <name>Zn(2+)</name>
        <dbReference type="ChEBI" id="CHEBI:29105"/>
        <label>2</label>
    </ligand>
</feature>
<feature type="binding site" evidence="1">
    <location>
        <position position="202"/>
    </location>
    <ligand>
        <name>Zn(2+)</name>
        <dbReference type="ChEBI" id="CHEBI:29105"/>
        <label>1</label>
    </ligand>
</feature>
<feature type="binding site" evidence="1">
    <location>
        <position position="205"/>
    </location>
    <ligand>
        <name>Zn(2+)</name>
        <dbReference type="ChEBI" id="CHEBI:29105"/>
        <label>1</label>
    </ligand>
</feature>
<dbReference type="EMBL" id="CP001098">
    <property type="protein sequence ID" value="ACL70029.1"/>
    <property type="molecule type" value="Genomic_DNA"/>
</dbReference>
<dbReference type="RefSeq" id="WP_012636213.1">
    <property type="nucleotide sequence ID" value="NC_011899.1"/>
</dbReference>
<dbReference type="SMR" id="B8CXL0"/>
<dbReference type="STRING" id="373903.Hore_12790"/>
<dbReference type="KEGG" id="hor:Hore_12790"/>
<dbReference type="eggNOG" id="COG0484">
    <property type="taxonomic scope" value="Bacteria"/>
</dbReference>
<dbReference type="HOGENOM" id="CLU_017633_0_7_9"/>
<dbReference type="OrthoDB" id="9779889at2"/>
<dbReference type="Proteomes" id="UP000000719">
    <property type="component" value="Chromosome"/>
</dbReference>
<dbReference type="GO" id="GO:0005737">
    <property type="term" value="C:cytoplasm"/>
    <property type="evidence" value="ECO:0007669"/>
    <property type="project" value="UniProtKB-SubCell"/>
</dbReference>
<dbReference type="GO" id="GO:0005524">
    <property type="term" value="F:ATP binding"/>
    <property type="evidence" value="ECO:0007669"/>
    <property type="project" value="InterPro"/>
</dbReference>
<dbReference type="GO" id="GO:0031072">
    <property type="term" value="F:heat shock protein binding"/>
    <property type="evidence" value="ECO:0007669"/>
    <property type="project" value="InterPro"/>
</dbReference>
<dbReference type="GO" id="GO:0051082">
    <property type="term" value="F:unfolded protein binding"/>
    <property type="evidence" value="ECO:0007669"/>
    <property type="project" value="UniProtKB-UniRule"/>
</dbReference>
<dbReference type="GO" id="GO:0008270">
    <property type="term" value="F:zinc ion binding"/>
    <property type="evidence" value="ECO:0007669"/>
    <property type="project" value="UniProtKB-UniRule"/>
</dbReference>
<dbReference type="GO" id="GO:0051085">
    <property type="term" value="P:chaperone cofactor-dependent protein refolding"/>
    <property type="evidence" value="ECO:0007669"/>
    <property type="project" value="TreeGrafter"/>
</dbReference>
<dbReference type="GO" id="GO:0006260">
    <property type="term" value="P:DNA replication"/>
    <property type="evidence" value="ECO:0007669"/>
    <property type="project" value="UniProtKB-KW"/>
</dbReference>
<dbReference type="GO" id="GO:0042026">
    <property type="term" value="P:protein refolding"/>
    <property type="evidence" value="ECO:0007669"/>
    <property type="project" value="TreeGrafter"/>
</dbReference>
<dbReference type="GO" id="GO:0009408">
    <property type="term" value="P:response to heat"/>
    <property type="evidence" value="ECO:0007669"/>
    <property type="project" value="InterPro"/>
</dbReference>
<dbReference type="CDD" id="cd06257">
    <property type="entry name" value="DnaJ"/>
    <property type="match status" value="1"/>
</dbReference>
<dbReference type="CDD" id="cd10747">
    <property type="entry name" value="DnaJ_C"/>
    <property type="match status" value="1"/>
</dbReference>
<dbReference type="CDD" id="cd10719">
    <property type="entry name" value="DnaJ_zf"/>
    <property type="match status" value="1"/>
</dbReference>
<dbReference type="FunFam" id="1.10.287.110:FF:000031">
    <property type="entry name" value="Molecular chaperone DnaJ"/>
    <property type="match status" value="1"/>
</dbReference>
<dbReference type="FunFam" id="2.10.230.10:FF:000002">
    <property type="entry name" value="Molecular chaperone DnaJ"/>
    <property type="match status" value="1"/>
</dbReference>
<dbReference type="FunFam" id="2.60.260.20:FF:000004">
    <property type="entry name" value="Molecular chaperone DnaJ"/>
    <property type="match status" value="1"/>
</dbReference>
<dbReference type="Gene3D" id="1.10.287.110">
    <property type="entry name" value="DnaJ domain"/>
    <property type="match status" value="1"/>
</dbReference>
<dbReference type="Gene3D" id="2.10.230.10">
    <property type="entry name" value="Heat shock protein DnaJ, cysteine-rich domain"/>
    <property type="match status" value="1"/>
</dbReference>
<dbReference type="Gene3D" id="2.60.260.20">
    <property type="entry name" value="Urease metallochaperone UreE, N-terminal domain"/>
    <property type="match status" value="2"/>
</dbReference>
<dbReference type="HAMAP" id="MF_01152">
    <property type="entry name" value="DnaJ"/>
    <property type="match status" value="1"/>
</dbReference>
<dbReference type="InterPro" id="IPR012724">
    <property type="entry name" value="DnaJ"/>
</dbReference>
<dbReference type="InterPro" id="IPR002939">
    <property type="entry name" value="DnaJ_C"/>
</dbReference>
<dbReference type="InterPro" id="IPR001623">
    <property type="entry name" value="DnaJ_domain"/>
</dbReference>
<dbReference type="InterPro" id="IPR018253">
    <property type="entry name" value="DnaJ_domain_CS"/>
</dbReference>
<dbReference type="InterPro" id="IPR008971">
    <property type="entry name" value="HSP40/DnaJ_pept-bd"/>
</dbReference>
<dbReference type="InterPro" id="IPR001305">
    <property type="entry name" value="HSP_DnaJ_Cys-rich_dom"/>
</dbReference>
<dbReference type="InterPro" id="IPR036410">
    <property type="entry name" value="HSP_DnaJ_Cys-rich_dom_sf"/>
</dbReference>
<dbReference type="InterPro" id="IPR036869">
    <property type="entry name" value="J_dom_sf"/>
</dbReference>
<dbReference type="NCBIfam" id="TIGR02349">
    <property type="entry name" value="DnaJ_bact"/>
    <property type="match status" value="1"/>
</dbReference>
<dbReference type="NCBIfam" id="NF008035">
    <property type="entry name" value="PRK10767.1"/>
    <property type="match status" value="1"/>
</dbReference>
<dbReference type="PANTHER" id="PTHR43096">
    <property type="entry name" value="DNAJ HOMOLOG 1, MITOCHONDRIAL-RELATED"/>
    <property type="match status" value="1"/>
</dbReference>
<dbReference type="PANTHER" id="PTHR43096:SF52">
    <property type="entry name" value="DNAJ HOMOLOG 1, MITOCHONDRIAL-RELATED"/>
    <property type="match status" value="1"/>
</dbReference>
<dbReference type="Pfam" id="PF00226">
    <property type="entry name" value="DnaJ"/>
    <property type="match status" value="1"/>
</dbReference>
<dbReference type="Pfam" id="PF01556">
    <property type="entry name" value="DnaJ_C"/>
    <property type="match status" value="1"/>
</dbReference>
<dbReference type="Pfam" id="PF00684">
    <property type="entry name" value="DnaJ_CXXCXGXG"/>
    <property type="match status" value="1"/>
</dbReference>
<dbReference type="PRINTS" id="PR00625">
    <property type="entry name" value="JDOMAIN"/>
</dbReference>
<dbReference type="SMART" id="SM00271">
    <property type="entry name" value="DnaJ"/>
    <property type="match status" value="1"/>
</dbReference>
<dbReference type="SUPFAM" id="SSF46565">
    <property type="entry name" value="Chaperone J-domain"/>
    <property type="match status" value="1"/>
</dbReference>
<dbReference type="SUPFAM" id="SSF57938">
    <property type="entry name" value="DnaJ/Hsp40 cysteine-rich domain"/>
    <property type="match status" value="1"/>
</dbReference>
<dbReference type="SUPFAM" id="SSF49493">
    <property type="entry name" value="HSP40/DnaJ peptide-binding domain"/>
    <property type="match status" value="2"/>
</dbReference>
<dbReference type="PROSITE" id="PS00636">
    <property type="entry name" value="DNAJ_1"/>
    <property type="match status" value="1"/>
</dbReference>
<dbReference type="PROSITE" id="PS50076">
    <property type="entry name" value="DNAJ_2"/>
    <property type="match status" value="1"/>
</dbReference>
<dbReference type="PROSITE" id="PS51188">
    <property type="entry name" value="ZF_CR"/>
    <property type="match status" value="1"/>
</dbReference>
<comment type="function">
    <text evidence="1">Participates actively in the response to hyperosmotic and heat shock by preventing the aggregation of stress-denatured proteins and by disaggregating proteins, also in an autonomous, DnaK-independent fashion. Unfolded proteins bind initially to DnaJ; upon interaction with the DnaJ-bound protein, DnaK hydrolyzes its bound ATP, resulting in the formation of a stable complex. GrpE releases ADP from DnaK; ATP binding to DnaK triggers the release of the substrate protein, thus completing the reaction cycle. Several rounds of ATP-dependent interactions between DnaJ, DnaK and GrpE are required for fully efficient folding. Also involved, together with DnaK and GrpE, in the DNA replication of plasmids through activation of initiation proteins.</text>
</comment>
<comment type="cofactor">
    <cofactor evidence="1">
        <name>Zn(2+)</name>
        <dbReference type="ChEBI" id="CHEBI:29105"/>
    </cofactor>
    <text evidence="1">Binds 2 Zn(2+) ions per monomer.</text>
</comment>
<comment type="subunit">
    <text evidence="1">Homodimer.</text>
</comment>
<comment type="subcellular location">
    <subcellularLocation>
        <location evidence="1">Cytoplasm</location>
    </subcellularLocation>
</comment>
<comment type="domain">
    <text evidence="1">The J domain is necessary and sufficient to stimulate DnaK ATPase activity. Zinc center 1 plays an important role in the autonomous, DnaK-independent chaperone activity of DnaJ. Zinc center 2 is essential for interaction with DnaK and for DnaJ activity.</text>
</comment>
<comment type="similarity">
    <text evidence="1">Belongs to the DnaJ family.</text>
</comment>
<sequence>MATSKDYYEILGVSRDADQKEIKKAYRRLARKYHPDINKDDPDAEEKFKEISEAYEILSDPDKRARYDQYGHAGINEEDFNFEDFAQRGFGGFDDIFDMFFGGGMGRRRRGPRPGADLQYRMKIPFEDAAFGTTKKITIPRTETCDTCNGTGAKPGTSPKTCPQCNGSGQVRYTQRTPFGQFAQTRTCDRCGGRGTIIDDPCPTCQGSGKVRKQRKITVKIPPGVDTGTRLRMPNEGEAGDKGAPNGDLYIIIEVEPHDIFERKDDDIYCEVPISFVQAALGDKIEVPTLEGKVKFTIPEGTQPDTVFRLKNKGIPHLNGRGRGDEFIKVRVVIPEKMNDEQKELLRKFAEISGDEINPEQKSFIKKVKDAFGVG</sequence>